<accession>Q9ZTX8</accession>
<accession>B2CT72</accession>
<accession>B2CT88</accession>
<accession>Q5IRX9</accession>
<sequence>MRLSSAGFNPQPHEVTGEKRVLNSELWHACAGPLVSLPPVGSRVVYFPQGHSEQVAASTNKEVDAHIPNYPSLHPQLICQLHNVTMHADVETDEVYAQMTLQPLNAQEQKDPYLPAELGVPSRQPTNYFCKTLTASDTSTHGGFSVPRRAAEKVFPPLDYSQQPPAQELMARDLHDNEWKFRHIFRGQPKRHLLTTGWSVFVSAKRLVAGDSVLFIWNDKNQLLLGIRRANRPQTVMPSSVLSSDSMHLGLLAAAAHAAATNSRFTIFYNPRASPSEFVIPLAKYVKAVYHTRVSVGMRFRMLFETEESSVRRYMGTITGICDLDPTRWANSHWRSVKVGWDESTAGERQPRVSLWEIEPLTTFPMYPSPFPLRLKRPWPPGLPSFHGLKEDDMGMSMSSPLMWDRGLQSLNFQGMGVNPWMQPRLDTSGLLGMQNDVYQAMAAAALQDMRGIDPAKAAASLLQFQNSPGFSMQSPSLVQPQMLQQQLSQQQQQLSQQQQQQQQLSQQQQQQLSQQQQQQLSQQQQQQLSQQQQQQAYLGVPETHQPQSQAQSQSNNHLSQQQQQVVDNHNPSASSAAVVSAMSQFGSASQPNTSPLQSMTSLCHQQSFSDTNGGNNPISPLHTLLSNFSQDESSQLLHLTRTNSAMTSSGWPSKRPAVDSSFQHSGAGNNNTQSVLEQLGQSHTSNVPPNAVSLPPFPGGRECSIEQEGSASDPHSHLLFGVNIDSSSLLMPNGMSNLRSIGIEGGDSTTLPFTSSNFNNDFSGNLAMTTPSSCIDESGFLQSSENLGSENPQSNTFVKVYKSGSFGRSLDISKFSSYHELRSELARMFGLEGQLEDPVRSGWQLVFVDRENDVLLLGDDPWPEFVSSVWCIKILSPQEVQQMGKRGLELLNSAPSSNNVDKLPSNGNCDDFGNRSDPRNLGNGIASVGGSFNY</sequence>
<gene>
    <name type="primary">ARF6</name>
    <name type="ordered locus">At1g30330</name>
    <name type="ORF">T4K22.6</name>
</gene>
<name>ARFF_ARATH</name>
<protein>
    <recommendedName>
        <fullName>Auxin response factor 6</fullName>
    </recommendedName>
</protein>
<keyword id="KW-0010">Activator</keyword>
<keyword id="KW-0025">Alternative splicing</keyword>
<keyword id="KW-0927">Auxin signaling pathway</keyword>
<keyword id="KW-0238">DNA-binding</keyword>
<keyword id="KW-0539">Nucleus</keyword>
<keyword id="KW-1185">Reference proteome</keyword>
<keyword id="KW-0804">Transcription</keyword>
<keyword id="KW-0805">Transcription regulation</keyword>
<reference key="1">
    <citation type="journal article" date="1999" name="Proc. Natl. Acad. Sci. U.S.A.">
        <title>Activation and repression of transcription by auxin-response factors.</title>
        <authorList>
            <person name="Ulmasov T."/>
            <person name="Hagen G."/>
            <person name="Guilfoyle T.J."/>
        </authorList>
    </citation>
    <scope>NUCLEOTIDE SEQUENCE [MRNA] (ISOFORM 2)</scope>
    <scope>TRANSCRIPTIONAL ACTIVATOR</scope>
    <source>
        <strain>cv. Columbia</strain>
    </source>
</reference>
<reference key="2">
    <citation type="journal article" date="2005" name="Plant Cell">
        <title>Functional genomic analysis of the AUXIN RESPONSE FACTOR gene family members in Arabidopsis thaliana: unique and overlapping functions of ARF7 and ARF19.</title>
        <authorList>
            <person name="Okushima Y."/>
            <person name="Overvoorde P.J."/>
            <person name="Arima K."/>
            <person name="Alonso J.M."/>
            <person name="Chan A."/>
            <person name="Chang C."/>
            <person name="Ecker J.R."/>
            <person name="Hughes B."/>
            <person name="Lui A."/>
            <person name="Nguyen D."/>
            <person name="Onodera C."/>
            <person name="Quach H."/>
            <person name="Smith A."/>
            <person name="Yu G."/>
            <person name="Theologis A."/>
        </authorList>
    </citation>
    <scope>NUCLEOTIDE SEQUENCE [MRNA] (ISOFORM 1)</scope>
    <source>
        <strain>cv. Columbia</strain>
    </source>
</reference>
<reference key="3">
    <citation type="journal article" date="2000" name="Nature">
        <title>Sequence and analysis of chromosome 1 of the plant Arabidopsis thaliana.</title>
        <authorList>
            <person name="Theologis A."/>
            <person name="Ecker J.R."/>
            <person name="Palm C.J."/>
            <person name="Federspiel N.A."/>
            <person name="Kaul S."/>
            <person name="White O."/>
            <person name="Alonso J."/>
            <person name="Altafi H."/>
            <person name="Araujo R."/>
            <person name="Bowman C.L."/>
            <person name="Brooks S.Y."/>
            <person name="Buehler E."/>
            <person name="Chan A."/>
            <person name="Chao Q."/>
            <person name="Chen H."/>
            <person name="Cheuk R.F."/>
            <person name="Chin C.W."/>
            <person name="Chung M.K."/>
            <person name="Conn L."/>
            <person name="Conway A.B."/>
            <person name="Conway A.R."/>
            <person name="Creasy T.H."/>
            <person name="Dewar K."/>
            <person name="Dunn P."/>
            <person name="Etgu P."/>
            <person name="Feldblyum T.V."/>
            <person name="Feng J.-D."/>
            <person name="Fong B."/>
            <person name="Fujii C.Y."/>
            <person name="Gill J.E."/>
            <person name="Goldsmith A.D."/>
            <person name="Haas B."/>
            <person name="Hansen N.F."/>
            <person name="Hughes B."/>
            <person name="Huizar L."/>
            <person name="Hunter J.L."/>
            <person name="Jenkins J."/>
            <person name="Johnson-Hopson C."/>
            <person name="Khan S."/>
            <person name="Khaykin E."/>
            <person name="Kim C.J."/>
            <person name="Koo H.L."/>
            <person name="Kremenetskaia I."/>
            <person name="Kurtz D.B."/>
            <person name="Kwan A."/>
            <person name="Lam B."/>
            <person name="Langin-Hooper S."/>
            <person name="Lee A."/>
            <person name="Lee J.M."/>
            <person name="Lenz C.A."/>
            <person name="Li J.H."/>
            <person name="Li Y.-P."/>
            <person name="Lin X."/>
            <person name="Liu S.X."/>
            <person name="Liu Z.A."/>
            <person name="Luros J.S."/>
            <person name="Maiti R."/>
            <person name="Marziali A."/>
            <person name="Militscher J."/>
            <person name="Miranda M."/>
            <person name="Nguyen M."/>
            <person name="Nierman W.C."/>
            <person name="Osborne B.I."/>
            <person name="Pai G."/>
            <person name="Peterson J."/>
            <person name="Pham P.K."/>
            <person name="Rizzo M."/>
            <person name="Rooney T."/>
            <person name="Rowley D."/>
            <person name="Sakano H."/>
            <person name="Salzberg S.L."/>
            <person name="Schwartz J.R."/>
            <person name="Shinn P."/>
            <person name="Southwick A.M."/>
            <person name="Sun H."/>
            <person name="Tallon L.J."/>
            <person name="Tambunga G."/>
            <person name="Toriumi M.J."/>
            <person name="Town C.D."/>
            <person name="Utterback T."/>
            <person name="Van Aken S."/>
            <person name="Vaysberg M."/>
            <person name="Vysotskaia V.S."/>
            <person name="Walker M."/>
            <person name="Wu D."/>
            <person name="Yu G."/>
            <person name="Fraser C.M."/>
            <person name="Venter J.C."/>
            <person name="Davis R.W."/>
        </authorList>
    </citation>
    <scope>NUCLEOTIDE SEQUENCE [LARGE SCALE GENOMIC DNA]</scope>
    <source>
        <strain>cv. Columbia</strain>
    </source>
</reference>
<reference key="4">
    <citation type="journal article" date="2017" name="Plant J.">
        <title>Araport11: a complete reannotation of the Arabidopsis thaliana reference genome.</title>
        <authorList>
            <person name="Cheng C.Y."/>
            <person name="Krishnakumar V."/>
            <person name="Chan A.P."/>
            <person name="Thibaud-Nissen F."/>
            <person name="Schobel S."/>
            <person name="Town C.D."/>
        </authorList>
    </citation>
    <scope>GENOME REANNOTATION</scope>
    <source>
        <strain>cv. Columbia</strain>
    </source>
</reference>
<reference key="5">
    <citation type="journal article" date="2008" name="Plant Physiol.">
        <title>Sequence variation of microRNAs and their binding sites in Arabidopsis.</title>
        <authorList>
            <person name="Ehrenreich I.M."/>
            <person name="Purugganan M.D."/>
        </authorList>
    </citation>
    <scope>NUCLEOTIDE SEQUENCE [GENOMIC DNA] OF 793-905</scope>
    <scope>VARIANT ASN-838</scope>
    <source>
        <strain>cv. Ag-0</strain>
        <strain>cv. An-1</strain>
        <strain>cv. Bay-0</strain>
        <strain>cv. Br-0</strain>
        <strain>cv. C24</strain>
        <strain>cv. Ct-1</strain>
        <strain>cv. Cvi-1</strain>
        <strain>cv. Edi-0</strain>
        <strain>cv. Ei-2</strain>
        <strain>cv. Ga-0</strain>
        <strain>cv. Gy-0</strain>
        <strain>cv. Kas-2</strain>
        <strain>cv. Ll-0</strain>
        <strain>cv. Mrk-0</strain>
        <strain>cv. Ms-0</strain>
        <strain>cv. Mt-0</strain>
        <strain>cv. Nd-1</strain>
        <strain>cv. Nok-3</strain>
        <strain>cv. Oy-0</strain>
        <strain>cv. Sorbo</strain>
        <strain>cv. Wa-1</strain>
        <strain>cv. Wassilewskija</strain>
        <strain>cv. Wei-0</strain>
        <strain>cv. Wt-5</strain>
    </source>
</reference>
<reference key="6">
    <citation type="journal article" date="1999" name="Plant J.">
        <title>Dimerization and DNA binding of auxin response factors.</title>
        <authorList>
            <person name="Ulmasov T."/>
            <person name="Hagen G."/>
            <person name="Guilfoyle T.J."/>
        </authorList>
    </citation>
    <scope>DIMERIZATION</scope>
    <scope>TISSUE SPECIFICITY</scope>
</reference>
<reference key="7">
    <citation type="journal article" date="2002" name="Plant Mol. Biol.">
        <title>Auxin-responsive gene expression: genes, promoters and regulatory factors.</title>
        <authorList>
            <person name="Hagen G."/>
            <person name="Guilfoyle T.J."/>
        </authorList>
    </citation>
    <scope>GENE FAMILY</scope>
    <scope>NOMENCLATURE</scope>
    <scope>FUNCTION</scope>
</reference>
<reference key="8">
    <citation type="journal article" date="2005" name="Development">
        <title>Auxin response factors ARF6 and ARF8 promote jasmonic acid production and flower maturation.</title>
        <authorList>
            <person name="Nagpal P."/>
            <person name="Ellis C.M."/>
            <person name="Weber H."/>
            <person name="Ploense S.E."/>
            <person name="Barkawi L.S."/>
            <person name="Guilfoyle T.J."/>
            <person name="Hagen G."/>
            <person name="Alonso J.M."/>
            <person name="Cohen J.D."/>
            <person name="Farmer E.E."/>
            <person name="Ecker J.R."/>
            <person name="Reed J.W."/>
        </authorList>
    </citation>
    <scope>FUNCTION</scope>
    <scope>DEVELOPMENTAL STAGE</scope>
</reference>
<reference key="9">
    <citation type="journal article" date="2006" name="Development">
        <title>Arabidopsis microRNA167 controls patterns of ARF6 and ARF8 expression, and regulates both female and male reproduction.</title>
        <authorList>
            <person name="Wu M.F."/>
            <person name="Tian Q."/>
            <person name="Reed J.W."/>
        </authorList>
    </citation>
    <scope>INDUCTION</scope>
</reference>
<reference key="10">
    <citation type="journal article" date="2008" name="Trends Plant Sci.">
        <title>The plant B3 superfamily.</title>
        <authorList>
            <person name="Swaminathan K."/>
            <person name="Peterson K."/>
            <person name="Jack T."/>
        </authorList>
    </citation>
    <scope>GENE FAMILY</scope>
</reference>
<feature type="chain" id="PRO_0000111510" description="Auxin response factor 6">
    <location>
        <begin position="1"/>
        <end position="935"/>
    </location>
</feature>
<feature type="domain" description="PB1" evidence="3">
    <location>
        <begin position="796"/>
        <end position="880"/>
    </location>
</feature>
<feature type="DNA-binding region" description="TF-B3" evidence="2">
    <location>
        <begin position="129"/>
        <end position="231"/>
    </location>
</feature>
<feature type="region of interest" description="Disordered" evidence="4">
    <location>
        <begin position="536"/>
        <end position="624"/>
    </location>
</feature>
<feature type="region of interest" description="Disordered" evidence="4">
    <location>
        <begin position="645"/>
        <end position="714"/>
    </location>
</feature>
<feature type="region of interest" description="Disordered" evidence="4">
    <location>
        <begin position="896"/>
        <end position="917"/>
    </location>
</feature>
<feature type="compositionally biased region" description="Low complexity" evidence="4">
    <location>
        <begin position="546"/>
        <end position="565"/>
    </location>
</feature>
<feature type="compositionally biased region" description="Low complexity" evidence="4">
    <location>
        <begin position="573"/>
        <end position="582"/>
    </location>
</feature>
<feature type="compositionally biased region" description="Polar residues" evidence="4">
    <location>
        <begin position="583"/>
        <end position="624"/>
    </location>
</feature>
<feature type="compositionally biased region" description="Polar residues" evidence="4">
    <location>
        <begin position="661"/>
        <end position="689"/>
    </location>
</feature>
<feature type="compositionally biased region" description="Polar residues" evidence="4">
    <location>
        <begin position="896"/>
        <end position="909"/>
    </location>
</feature>
<feature type="splice variant" id="VSP_037312" description="In isoform 2." evidence="10">
    <location>
        <begin position="15"/>
        <end position="16"/>
    </location>
</feature>
<feature type="sequence variant" description="In strain: cv. Nd-1." evidence="9">
    <original>D</original>
    <variation>N</variation>
    <location>
        <position position="838"/>
    </location>
</feature>
<comment type="function">
    <text evidence="6 7">Auxin response factors (ARFs) are transcriptional factors that bind specifically to the DNA sequence 5'-TGTCTC-3' found in the auxin-responsive promoter elements (AuxREs). Seems to act as transcriptional activator. Formation of heterodimers with Aux/IAA proteins may alter their ability to modulate early auxin response genes expression. Regulates both stamen and gynoecium maturation. Promotes jasmonic acid production. Partially redundant with ARF8.</text>
</comment>
<comment type="subunit">
    <text evidence="1">Homodimers and heterodimers.</text>
</comment>
<comment type="interaction">
    <interactant intactId="EBI-3946770">
        <id>Q9ZTX8</id>
    </interactant>
    <interactant intactId="EBI-3946762">
        <id>Q9XED8</id>
        <label>ARF9</label>
    </interactant>
    <organismsDiffer>false</organismsDiffer>
    <experiments>3</experiments>
</comment>
<comment type="interaction">
    <interactant intactId="EBI-3946770">
        <id>Q9ZTX8</id>
    </interactant>
    <interactant intactId="EBI-3133404">
        <id>Q9XFM0</id>
        <label>IAA28</label>
    </interactant>
    <organismsDiffer>false</organismsDiffer>
    <experiments>3</experiments>
</comment>
<comment type="subcellular location">
    <subcellularLocation>
        <location>Nucleus</location>
    </subcellularLocation>
</comment>
<comment type="alternative products">
    <event type="alternative splicing"/>
    <isoform>
        <id>Q9ZTX8-1</id>
        <name>1</name>
        <sequence type="displayed"/>
    </isoform>
    <isoform>
        <id>Q9ZTX8-2</id>
        <name>2</name>
        <sequence type="described" ref="VSP_037312"/>
    </isoform>
</comment>
<comment type="tissue specificity">
    <text evidence="5">Expressed in the whole plant.</text>
</comment>
<comment type="developmental stage">
    <text evidence="7">Expressed in sepals at stages 11, 12 and 13 of flower development. Highly expressed in petals at stages 9-10, decreases at stage 11 and disappears after flower stage 12. In anthers, expressed at stage 11 in the tapetum, disappears early in stage 12 when the tapetum degrades and reappears throughout the anther late in stage 12 to persist at least until stage 13. In stamen filaments, expressed at stages 12 to 13, especially near the apical end of the filament. Expressed throughout the gynoecium at early stages up to stage 12, especially strongly in ovules. Expression in gynoecium decreases late in stage 12, but persists through stage 13, especially near the apical end including the style.</text>
</comment>
<comment type="induction">
    <text evidence="8">Repressed by miR167.</text>
</comment>
<comment type="domain">
    <text>Interactions between auxin response factors (ARFs) and Aux/IAA proteins occur through their C-terminal dimerization domains III and IV.</text>
</comment>
<comment type="miscellaneous">
    <molecule>Isoform 2</molecule>
    <text evidence="11">May be due to a competing acceptor splice site.</text>
</comment>
<comment type="similarity">
    <text evidence="11">Belongs to the ARF family.</text>
</comment>
<organism>
    <name type="scientific">Arabidopsis thaliana</name>
    <name type="common">Mouse-ear cress</name>
    <dbReference type="NCBI Taxonomy" id="3702"/>
    <lineage>
        <taxon>Eukaryota</taxon>
        <taxon>Viridiplantae</taxon>
        <taxon>Streptophyta</taxon>
        <taxon>Embryophyta</taxon>
        <taxon>Tracheophyta</taxon>
        <taxon>Spermatophyta</taxon>
        <taxon>Magnoliopsida</taxon>
        <taxon>eudicotyledons</taxon>
        <taxon>Gunneridae</taxon>
        <taxon>Pentapetalae</taxon>
        <taxon>rosids</taxon>
        <taxon>malvids</taxon>
        <taxon>Brassicales</taxon>
        <taxon>Brassicaceae</taxon>
        <taxon>Camelineae</taxon>
        <taxon>Arabidopsis</taxon>
    </lineage>
</organism>
<proteinExistence type="evidence at protein level"/>
<dbReference type="EMBL" id="AF013467">
    <property type="protein sequence ID" value="AAD01513.1"/>
    <property type="molecule type" value="mRNA"/>
</dbReference>
<dbReference type="EMBL" id="AY669788">
    <property type="protein sequence ID" value="AAT67072.1"/>
    <property type="molecule type" value="mRNA"/>
</dbReference>
<dbReference type="EMBL" id="AC025295">
    <property type="protein sequence ID" value="AAG51093.1"/>
    <property type="molecule type" value="Genomic_DNA"/>
</dbReference>
<dbReference type="EMBL" id="CP002684">
    <property type="protein sequence ID" value="AEE31206.1"/>
    <property type="molecule type" value="Genomic_DNA"/>
</dbReference>
<dbReference type="EMBL" id="CP002684">
    <property type="protein sequence ID" value="AEE31207.1"/>
    <property type="molecule type" value="Genomic_DNA"/>
</dbReference>
<dbReference type="EMBL" id="CP002684">
    <property type="protein sequence ID" value="ANM58494.1"/>
    <property type="molecule type" value="Genomic_DNA"/>
</dbReference>
<dbReference type="EMBL" id="EU550049">
    <property type="protein sequence ID" value="ACB30835.1"/>
    <property type="molecule type" value="Genomic_DNA"/>
</dbReference>
<dbReference type="EMBL" id="EU550050">
    <property type="protein sequence ID" value="ACB30836.1"/>
    <property type="molecule type" value="Genomic_DNA"/>
</dbReference>
<dbReference type="EMBL" id="EU550051">
    <property type="protein sequence ID" value="ACB30837.1"/>
    <property type="molecule type" value="Genomic_DNA"/>
</dbReference>
<dbReference type="EMBL" id="EU550052">
    <property type="protein sequence ID" value="ACB30838.1"/>
    <property type="molecule type" value="Genomic_DNA"/>
</dbReference>
<dbReference type="EMBL" id="EU550053">
    <property type="protein sequence ID" value="ACB30839.1"/>
    <property type="molecule type" value="Genomic_DNA"/>
</dbReference>
<dbReference type="EMBL" id="EU550054">
    <property type="protein sequence ID" value="ACB30840.1"/>
    <property type="molecule type" value="Genomic_DNA"/>
</dbReference>
<dbReference type="EMBL" id="EU550055">
    <property type="protein sequence ID" value="ACB30841.1"/>
    <property type="molecule type" value="Genomic_DNA"/>
</dbReference>
<dbReference type="EMBL" id="EU550056">
    <property type="protein sequence ID" value="ACB30842.1"/>
    <property type="molecule type" value="Genomic_DNA"/>
</dbReference>
<dbReference type="EMBL" id="EU550057">
    <property type="protein sequence ID" value="ACB30843.1"/>
    <property type="molecule type" value="Genomic_DNA"/>
</dbReference>
<dbReference type="EMBL" id="EU550058">
    <property type="protein sequence ID" value="ACB30844.1"/>
    <property type="molecule type" value="Genomic_DNA"/>
</dbReference>
<dbReference type="EMBL" id="EU550059">
    <property type="protein sequence ID" value="ACB30845.1"/>
    <property type="molecule type" value="Genomic_DNA"/>
</dbReference>
<dbReference type="EMBL" id="EU550060">
    <property type="protein sequence ID" value="ACB30846.1"/>
    <property type="molecule type" value="Genomic_DNA"/>
</dbReference>
<dbReference type="EMBL" id="EU550061">
    <property type="protein sequence ID" value="ACB30847.1"/>
    <property type="molecule type" value="Genomic_DNA"/>
</dbReference>
<dbReference type="EMBL" id="EU550062">
    <property type="protein sequence ID" value="ACB30848.1"/>
    <property type="molecule type" value="Genomic_DNA"/>
</dbReference>
<dbReference type="EMBL" id="EU550063">
    <property type="protein sequence ID" value="ACB30849.1"/>
    <property type="molecule type" value="Genomic_DNA"/>
</dbReference>
<dbReference type="EMBL" id="EU550064">
    <property type="protein sequence ID" value="ACB30850.1"/>
    <property type="molecule type" value="Genomic_DNA"/>
</dbReference>
<dbReference type="EMBL" id="EU550065">
    <property type="protein sequence ID" value="ACB30851.1"/>
    <property type="molecule type" value="Genomic_DNA"/>
</dbReference>
<dbReference type="EMBL" id="EU550066">
    <property type="protein sequence ID" value="ACB30852.1"/>
    <property type="molecule type" value="Genomic_DNA"/>
</dbReference>
<dbReference type="EMBL" id="EU550067">
    <property type="protein sequence ID" value="ACB30853.1"/>
    <property type="molecule type" value="Genomic_DNA"/>
</dbReference>
<dbReference type="EMBL" id="EU550068">
    <property type="protein sequence ID" value="ACB30854.1"/>
    <property type="molecule type" value="Genomic_DNA"/>
</dbReference>
<dbReference type="EMBL" id="EU550069">
    <property type="protein sequence ID" value="ACB30855.1"/>
    <property type="molecule type" value="Genomic_DNA"/>
</dbReference>
<dbReference type="EMBL" id="EU550070">
    <property type="protein sequence ID" value="ACB30856.1"/>
    <property type="molecule type" value="Genomic_DNA"/>
</dbReference>
<dbReference type="EMBL" id="EU550071">
    <property type="protein sequence ID" value="ACB30857.1"/>
    <property type="molecule type" value="Genomic_DNA"/>
</dbReference>
<dbReference type="EMBL" id="EU550072">
    <property type="protein sequence ID" value="ACB30858.1"/>
    <property type="molecule type" value="Genomic_DNA"/>
</dbReference>
<dbReference type="PIR" id="F86427">
    <property type="entry name" value="F86427"/>
</dbReference>
<dbReference type="RefSeq" id="NP_001031115.1">
    <molecule id="Q9ZTX8-1"/>
    <property type="nucleotide sequence ID" value="NM_001036038.2"/>
</dbReference>
<dbReference type="RefSeq" id="NP_001320924.1">
    <molecule id="Q9ZTX8-1"/>
    <property type="nucleotide sequence ID" value="NM_001332891.1"/>
</dbReference>
<dbReference type="RefSeq" id="NP_174323.1">
    <molecule id="Q9ZTX8-2"/>
    <property type="nucleotide sequence ID" value="NM_102771.4"/>
</dbReference>
<dbReference type="SMR" id="Q9ZTX8"/>
<dbReference type="BioGRID" id="25148">
    <property type="interactions" value="37"/>
</dbReference>
<dbReference type="FunCoup" id="Q9ZTX8">
    <property type="interactions" value="1204"/>
</dbReference>
<dbReference type="IntAct" id="Q9ZTX8">
    <property type="interactions" value="32"/>
</dbReference>
<dbReference type="STRING" id="3702.Q9ZTX8"/>
<dbReference type="GlyGen" id="Q9ZTX8">
    <property type="glycosylation" value="2 sites, 1 O-linked glycan (2 sites)"/>
</dbReference>
<dbReference type="PaxDb" id="3702-AT1G30330.2"/>
<dbReference type="ProteomicsDB" id="240607">
    <molecule id="Q9ZTX8-1"/>
</dbReference>
<dbReference type="EnsemblPlants" id="AT1G30330.1">
    <molecule id="Q9ZTX8-2"/>
    <property type="protein sequence ID" value="AT1G30330.1"/>
    <property type="gene ID" value="AT1G30330"/>
</dbReference>
<dbReference type="EnsemblPlants" id="AT1G30330.2">
    <molecule id="Q9ZTX8-1"/>
    <property type="protein sequence ID" value="AT1G30330.2"/>
    <property type="gene ID" value="AT1G30330"/>
</dbReference>
<dbReference type="EnsemblPlants" id="AT1G30330.3">
    <molecule id="Q9ZTX8-1"/>
    <property type="protein sequence ID" value="AT1G30330.3"/>
    <property type="gene ID" value="AT1G30330"/>
</dbReference>
<dbReference type="GeneID" id="839913"/>
<dbReference type="Gramene" id="AT1G30330.1">
    <molecule id="Q9ZTX8-2"/>
    <property type="protein sequence ID" value="AT1G30330.1"/>
    <property type="gene ID" value="AT1G30330"/>
</dbReference>
<dbReference type="Gramene" id="AT1G30330.2">
    <molecule id="Q9ZTX8-1"/>
    <property type="protein sequence ID" value="AT1G30330.2"/>
    <property type="gene ID" value="AT1G30330"/>
</dbReference>
<dbReference type="Gramene" id="AT1G30330.3">
    <molecule id="Q9ZTX8-1"/>
    <property type="protein sequence ID" value="AT1G30330.3"/>
    <property type="gene ID" value="AT1G30330"/>
</dbReference>
<dbReference type="KEGG" id="ath:AT1G30330"/>
<dbReference type="Araport" id="AT1G30330"/>
<dbReference type="TAIR" id="AT1G30330">
    <property type="gene designation" value="ARF6"/>
</dbReference>
<dbReference type="eggNOG" id="ENOG502QSCZ">
    <property type="taxonomic scope" value="Eukaryota"/>
</dbReference>
<dbReference type="HOGENOM" id="CLU_002626_4_0_1"/>
<dbReference type="InParanoid" id="Q9ZTX8"/>
<dbReference type="OMA" id="VQENHRQ"/>
<dbReference type="PhylomeDB" id="Q9ZTX8"/>
<dbReference type="PRO" id="PR:Q9ZTX8"/>
<dbReference type="Proteomes" id="UP000006548">
    <property type="component" value="Chromosome 1"/>
</dbReference>
<dbReference type="ExpressionAtlas" id="Q9ZTX8">
    <property type="expression patterns" value="baseline and differential"/>
</dbReference>
<dbReference type="GO" id="GO:0005634">
    <property type="term" value="C:nucleus"/>
    <property type="evidence" value="ECO:0000314"/>
    <property type="project" value="TAIR"/>
</dbReference>
<dbReference type="GO" id="GO:0003677">
    <property type="term" value="F:DNA binding"/>
    <property type="evidence" value="ECO:0007669"/>
    <property type="project" value="UniProtKB-KW"/>
</dbReference>
<dbReference type="GO" id="GO:0003700">
    <property type="term" value="F:DNA-binding transcription factor activity"/>
    <property type="evidence" value="ECO:0000250"/>
    <property type="project" value="TAIR"/>
</dbReference>
<dbReference type="GO" id="GO:0009734">
    <property type="term" value="P:auxin-activated signaling pathway"/>
    <property type="evidence" value="ECO:0007669"/>
    <property type="project" value="UniProtKB-KW"/>
</dbReference>
<dbReference type="GO" id="GO:0009908">
    <property type="term" value="P:flower development"/>
    <property type="evidence" value="ECO:0000316"/>
    <property type="project" value="TAIR"/>
</dbReference>
<dbReference type="GO" id="GO:0009733">
    <property type="term" value="P:response to auxin"/>
    <property type="evidence" value="ECO:0000315"/>
    <property type="project" value="TAIR"/>
</dbReference>
<dbReference type="CDD" id="cd10017">
    <property type="entry name" value="B3_DNA"/>
    <property type="match status" value="1"/>
</dbReference>
<dbReference type="FunFam" id="2.30.30.1040:FF:000001">
    <property type="entry name" value="Auxin response factor"/>
    <property type="match status" value="1"/>
</dbReference>
<dbReference type="FunFam" id="2.40.330.10:FF:000001">
    <property type="entry name" value="Auxin response factor"/>
    <property type="match status" value="1"/>
</dbReference>
<dbReference type="FunFam" id="3.10.20.90:FF:000047">
    <property type="entry name" value="Auxin response factor"/>
    <property type="match status" value="1"/>
</dbReference>
<dbReference type="Gene3D" id="2.30.30.1040">
    <property type="match status" value="1"/>
</dbReference>
<dbReference type="Gene3D" id="2.40.330.10">
    <property type="entry name" value="DNA-binding pseudobarrel domain"/>
    <property type="match status" value="1"/>
</dbReference>
<dbReference type="Gene3D" id="3.10.20.90">
    <property type="entry name" value="Phosphatidylinositol 3-kinase Catalytic Subunit, Chain A, domain 1"/>
    <property type="match status" value="1"/>
</dbReference>
<dbReference type="InterPro" id="IPR010525">
    <property type="entry name" value="ARF_dom"/>
</dbReference>
<dbReference type="InterPro" id="IPR044835">
    <property type="entry name" value="ARF_plant"/>
</dbReference>
<dbReference type="InterPro" id="IPR033389">
    <property type="entry name" value="AUX/IAA_dom"/>
</dbReference>
<dbReference type="InterPro" id="IPR003340">
    <property type="entry name" value="B3_DNA-bd"/>
</dbReference>
<dbReference type="InterPro" id="IPR015300">
    <property type="entry name" value="DNA-bd_pseudobarrel_sf"/>
</dbReference>
<dbReference type="InterPro" id="IPR053793">
    <property type="entry name" value="PB1-like"/>
</dbReference>
<dbReference type="PANTHER" id="PTHR31384">
    <property type="entry name" value="AUXIN RESPONSE FACTOR 4-RELATED"/>
    <property type="match status" value="1"/>
</dbReference>
<dbReference type="PANTHER" id="PTHR31384:SF150">
    <property type="entry name" value="AUXIN RESPONSE FACTOR 6"/>
    <property type="match status" value="1"/>
</dbReference>
<dbReference type="Pfam" id="PF06507">
    <property type="entry name" value="ARF_AD"/>
    <property type="match status" value="1"/>
</dbReference>
<dbReference type="Pfam" id="PF02309">
    <property type="entry name" value="AUX_IAA"/>
    <property type="match status" value="1"/>
</dbReference>
<dbReference type="Pfam" id="PF02362">
    <property type="entry name" value="B3"/>
    <property type="match status" value="1"/>
</dbReference>
<dbReference type="SMART" id="SM01019">
    <property type="entry name" value="B3"/>
    <property type="match status" value="1"/>
</dbReference>
<dbReference type="SUPFAM" id="SSF54277">
    <property type="entry name" value="CAD &amp; PB1 domains"/>
    <property type="match status" value="1"/>
</dbReference>
<dbReference type="SUPFAM" id="SSF101936">
    <property type="entry name" value="DNA-binding pseudobarrel domain"/>
    <property type="match status" value="1"/>
</dbReference>
<dbReference type="PROSITE" id="PS50863">
    <property type="entry name" value="B3"/>
    <property type="match status" value="1"/>
</dbReference>
<dbReference type="PROSITE" id="PS51745">
    <property type="entry name" value="PB1"/>
    <property type="match status" value="1"/>
</dbReference>
<evidence type="ECO:0000250" key="1"/>
<evidence type="ECO:0000255" key="2">
    <source>
        <dbReference type="PROSITE-ProRule" id="PRU00326"/>
    </source>
</evidence>
<evidence type="ECO:0000255" key="3">
    <source>
        <dbReference type="PROSITE-ProRule" id="PRU01081"/>
    </source>
</evidence>
<evidence type="ECO:0000256" key="4">
    <source>
        <dbReference type="SAM" id="MobiDB-lite"/>
    </source>
</evidence>
<evidence type="ECO:0000269" key="5">
    <source>
    </source>
</evidence>
<evidence type="ECO:0000269" key="6">
    <source>
    </source>
</evidence>
<evidence type="ECO:0000269" key="7">
    <source>
    </source>
</evidence>
<evidence type="ECO:0000269" key="8">
    <source>
    </source>
</evidence>
<evidence type="ECO:0000269" key="9">
    <source>
    </source>
</evidence>
<evidence type="ECO:0000303" key="10">
    <source>
    </source>
</evidence>
<evidence type="ECO:0000305" key="11"/>